<sequence length="227" mass="25419">MTQSTHDGHAAHSLHGGVYPGNLFMVVAPSGAGKSTLVNALLSKDSDICLSISYTTRKPRPGEQDGQHYHFTTVEDFRTRHAAHEFLESAEVHGNYYGTSRVWIEEQMKNGHDVLLEIDWQGALQVKKQFRNAVGIFILPPSLDALEERLKKRGQDEPKVITRRLLAAGSEIAHAPEAEYVVINENFERALAELECIVAATRLRFASQYARHTELFIELGIHLPHAE</sequence>
<keyword id="KW-0067">ATP-binding</keyword>
<keyword id="KW-0963">Cytoplasm</keyword>
<keyword id="KW-0418">Kinase</keyword>
<keyword id="KW-0547">Nucleotide-binding</keyword>
<keyword id="KW-0808">Transferase</keyword>
<organism>
    <name type="scientific">Burkholderia lata (strain ATCC 17760 / DSM 23089 / LMG 22485 / NCIMB 9086 / R18194 / 383)</name>
    <dbReference type="NCBI Taxonomy" id="482957"/>
    <lineage>
        <taxon>Bacteria</taxon>
        <taxon>Pseudomonadati</taxon>
        <taxon>Pseudomonadota</taxon>
        <taxon>Betaproteobacteria</taxon>
        <taxon>Burkholderiales</taxon>
        <taxon>Burkholderiaceae</taxon>
        <taxon>Burkholderia</taxon>
        <taxon>Burkholderia cepacia complex</taxon>
    </lineage>
</organism>
<reference key="1">
    <citation type="submission" date="2005-10" db="EMBL/GenBank/DDBJ databases">
        <title>Complete sequence of chromosome 1 of Burkholderia sp. 383.</title>
        <authorList>
            <consortium name="US DOE Joint Genome Institute"/>
            <person name="Copeland A."/>
            <person name="Lucas S."/>
            <person name="Lapidus A."/>
            <person name="Barry K."/>
            <person name="Detter J.C."/>
            <person name="Glavina T."/>
            <person name="Hammon N."/>
            <person name="Israni S."/>
            <person name="Pitluck S."/>
            <person name="Chain P."/>
            <person name="Malfatti S."/>
            <person name="Shin M."/>
            <person name="Vergez L."/>
            <person name="Schmutz J."/>
            <person name="Larimer F."/>
            <person name="Land M."/>
            <person name="Kyrpides N."/>
            <person name="Lykidis A."/>
            <person name="Richardson P."/>
        </authorList>
    </citation>
    <scope>NUCLEOTIDE SEQUENCE [LARGE SCALE GENOMIC DNA]</scope>
    <source>
        <strain>ATCC 17760 / DSM 23089 / LMG 22485 / NCIMB 9086 / R18194 / 383</strain>
    </source>
</reference>
<comment type="function">
    <text evidence="1">Essential for recycling GMP and indirectly, cGMP.</text>
</comment>
<comment type="catalytic activity">
    <reaction evidence="1">
        <text>GMP + ATP = GDP + ADP</text>
        <dbReference type="Rhea" id="RHEA:20780"/>
        <dbReference type="ChEBI" id="CHEBI:30616"/>
        <dbReference type="ChEBI" id="CHEBI:58115"/>
        <dbReference type="ChEBI" id="CHEBI:58189"/>
        <dbReference type="ChEBI" id="CHEBI:456216"/>
        <dbReference type="EC" id="2.7.4.8"/>
    </reaction>
</comment>
<comment type="subcellular location">
    <subcellularLocation>
        <location evidence="1">Cytoplasm</location>
    </subcellularLocation>
</comment>
<comment type="similarity">
    <text evidence="1">Belongs to the guanylate kinase family.</text>
</comment>
<feature type="chain" id="PRO_0000266297" description="Guanylate kinase">
    <location>
        <begin position="1"/>
        <end position="227"/>
    </location>
</feature>
<feature type="domain" description="Guanylate kinase-like" evidence="1">
    <location>
        <begin position="21"/>
        <end position="199"/>
    </location>
</feature>
<feature type="binding site" evidence="1">
    <location>
        <begin position="28"/>
        <end position="35"/>
    </location>
    <ligand>
        <name>ATP</name>
        <dbReference type="ChEBI" id="CHEBI:30616"/>
    </ligand>
</feature>
<evidence type="ECO:0000255" key="1">
    <source>
        <dbReference type="HAMAP-Rule" id="MF_00328"/>
    </source>
</evidence>
<dbReference type="EC" id="2.7.4.8" evidence="1"/>
<dbReference type="EMBL" id="CP000151">
    <property type="protein sequence ID" value="ABB07704.1"/>
    <property type="molecule type" value="Genomic_DNA"/>
</dbReference>
<dbReference type="RefSeq" id="WP_011351284.1">
    <property type="nucleotide sequence ID" value="NC_007510.1"/>
</dbReference>
<dbReference type="SMR" id="Q39IL2"/>
<dbReference type="GeneID" id="45094004"/>
<dbReference type="KEGG" id="bur:Bcep18194_A4107"/>
<dbReference type="PATRIC" id="fig|482957.22.peg.992"/>
<dbReference type="HOGENOM" id="CLU_001715_1_0_4"/>
<dbReference type="Proteomes" id="UP000002705">
    <property type="component" value="Chromosome 1"/>
</dbReference>
<dbReference type="GO" id="GO:0005829">
    <property type="term" value="C:cytosol"/>
    <property type="evidence" value="ECO:0007669"/>
    <property type="project" value="TreeGrafter"/>
</dbReference>
<dbReference type="GO" id="GO:0005524">
    <property type="term" value="F:ATP binding"/>
    <property type="evidence" value="ECO:0007669"/>
    <property type="project" value="UniProtKB-UniRule"/>
</dbReference>
<dbReference type="GO" id="GO:0004385">
    <property type="term" value="F:guanylate kinase activity"/>
    <property type="evidence" value="ECO:0007669"/>
    <property type="project" value="UniProtKB-UniRule"/>
</dbReference>
<dbReference type="CDD" id="cd00071">
    <property type="entry name" value="GMPK"/>
    <property type="match status" value="1"/>
</dbReference>
<dbReference type="FunFam" id="3.30.63.10:FF:000002">
    <property type="entry name" value="Guanylate kinase 1"/>
    <property type="match status" value="1"/>
</dbReference>
<dbReference type="Gene3D" id="3.30.63.10">
    <property type="entry name" value="Guanylate Kinase phosphate binding domain"/>
    <property type="match status" value="1"/>
</dbReference>
<dbReference type="Gene3D" id="3.40.50.300">
    <property type="entry name" value="P-loop containing nucleotide triphosphate hydrolases"/>
    <property type="match status" value="1"/>
</dbReference>
<dbReference type="HAMAP" id="MF_00328">
    <property type="entry name" value="Guanylate_kinase"/>
    <property type="match status" value="1"/>
</dbReference>
<dbReference type="InterPro" id="IPR008145">
    <property type="entry name" value="GK/Ca_channel_bsu"/>
</dbReference>
<dbReference type="InterPro" id="IPR008144">
    <property type="entry name" value="Guanylate_kin-like_dom"/>
</dbReference>
<dbReference type="InterPro" id="IPR017665">
    <property type="entry name" value="Guanylate_kinase"/>
</dbReference>
<dbReference type="InterPro" id="IPR020590">
    <property type="entry name" value="Guanylate_kinase_CS"/>
</dbReference>
<dbReference type="InterPro" id="IPR027417">
    <property type="entry name" value="P-loop_NTPase"/>
</dbReference>
<dbReference type="NCBIfam" id="TIGR03263">
    <property type="entry name" value="guanyl_kin"/>
    <property type="match status" value="1"/>
</dbReference>
<dbReference type="PANTHER" id="PTHR23117:SF13">
    <property type="entry name" value="GUANYLATE KINASE"/>
    <property type="match status" value="1"/>
</dbReference>
<dbReference type="PANTHER" id="PTHR23117">
    <property type="entry name" value="GUANYLATE KINASE-RELATED"/>
    <property type="match status" value="1"/>
</dbReference>
<dbReference type="Pfam" id="PF00625">
    <property type="entry name" value="Guanylate_kin"/>
    <property type="match status" value="1"/>
</dbReference>
<dbReference type="SMART" id="SM00072">
    <property type="entry name" value="GuKc"/>
    <property type="match status" value="1"/>
</dbReference>
<dbReference type="SUPFAM" id="SSF52540">
    <property type="entry name" value="P-loop containing nucleoside triphosphate hydrolases"/>
    <property type="match status" value="1"/>
</dbReference>
<dbReference type="PROSITE" id="PS00856">
    <property type="entry name" value="GUANYLATE_KINASE_1"/>
    <property type="match status" value="1"/>
</dbReference>
<dbReference type="PROSITE" id="PS50052">
    <property type="entry name" value="GUANYLATE_KINASE_2"/>
    <property type="match status" value="1"/>
</dbReference>
<proteinExistence type="inferred from homology"/>
<name>KGUA_BURL3</name>
<gene>
    <name evidence="1" type="primary">gmk</name>
    <name type="ordered locus">Bcep18194_A4107</name>
</gene>
<protein>
    <recommendedName>
        <fullName evidence="1">Guanylate kinase</fullName>
        <ecNumber evidence="1">2.7.4.8</ecNumber>
    </recommendedName>
    <alternativeName>
        <fullName evidence="1">GMP kinase</fullName>
    </alternativeName>
</protein>
<accession>Q39IL2</accession>